<organism>
    <name type="scientific">Clostridium acetobutylicum (strain ATCC 824 / DSM 792 / JCM 1419 / IAM 19013 / LMG 5710 / NBRC 13948 / NRRL B-527 / VKM B-1787 / 2291 / W)</name>
    <dbReference type="NCBI Taxonomy" id="272562"/>
    <lineage>
        <taxon>Bacteria</taxon>
        <taxon>Bacillati</taxon>
        <taxon>Bacillota</taxon>
        <taxon>Clostridia</taxon>
        <taxon>Eubacteriales</taxon>
        <taxon>Clostridiaceae</taxon>
        <taxon>Clostridium</taxon>
    </lineage>
</organism>
<gene>
    <name type="ordered locus">CA_C1420</name>
</gene>
<dbReference type="EMBL" id="AE001437">
    <property type="protein sequence ID" value="AAK79388.1"/>
    <property type="molecule type" value="Genomic_DNA"/>
</dbReference>
<dbReference type="PIR" id="A97075">
    <property type="entry name" value="A97075"/>
</dbReference>
<dbReference type="RefSeq" id="NP_348048.1">
    <property type="nucleotide sequence ID" value="NC_003030.1"/>
</dbReference>
<dbReference type="SMR" id="Q97J66"/>
<dbReference type="STRING" id="272562.CA_C1420"/>
<dbReference type="KEGG" id="cac:CA_C1420"/>
<dbReference type="PATRIC" id="fig|272562.8.peg.1625"/>
<dbReference type="eggNOG" id="COG2078">
    <property type="taxonomic scope" value="Bacteria"/>
</dbReference>
<dbReference type="eggNOG" id="COG3885">
    <property type="taxonomic scope" value="Bacteria"/>
</dbReference>
<dbReference type="HOGENOM" id="CLU_048702_0_0_9"/>
<dbReference type="OrthoDB" id="159752at2"/>
<dbReference type="Proteomes" id="UP000000814">
    <property type="component" value="Chromosome"/>
</dbReference>
<dbReference type="GO" id="GO:0008198">
    <property type="term" value="F:ferrous iron binding"/>
    <property type="evidence" value="ECO:0007669"/>
    <property type="project" value="InterPro"/>
</dbReference>
<dbReference type="GO" id="GO:0016702">
    <property type="term" value="F:oxidoreductase activity, acting on single donors with incorporation of molecular oxygen, incorporation of two atoms of oxygen"/>
    <property type="evidence" value="ECO:0007669"/>
    <property type="project" value="UniProtKB-ARBA"/>
</dbReference>
<dbReference type="CDD" id="cd07951">
    <property type="entry name" value="ED_3B_N_AMMECR1"/>
    <property type="match status" value="1"/>
</dbReference>
<dbReference type="Gene3D" id="3.30.700.20">
    <property type="entry name" value="Hypothetical protein ph0010, domain 1"/>
    <property type="match status" value="1"/>
</dbReference>
<dbReference type="Gene3D" id="3.40.830.10">
    <property type="entry name" value="LigB-like"/>
    <property type="match status" value="1"/>
</dbReference>
<dbReference type="HAMAP" id="MF_00645">
    <property type="entry name" value="AMMECR1"/>
    <property type="match status" value="1"/>
</dbReference>
<dbReference type="InterPro" id="IPR023473">
    <property type="entry name" value="AMMECR1"/>
</dbReference>
<dbReference type="InterPro" id="IPR036071">
    <property type="entry name" value="AMMECR1_dom_sf"/>
</dbReference>
<dbReference type="InterPro" id="IPR002733">
    <property type="entry name" value="AMMECR1_domain"/>
</dbReference>
<dbReference type="InterPro" id="IPR027485">
    <property type="entry name" value="AMMECR1_N"/>
</dbReference>
<dbReference type="InterPro" id="IPR027623">
    <property type="entry name" value="AmmeMemoSam_A"/>
</dbReference>
<dbReference type="InterPro" id="IPR023472">
    <property type="entry name" value="Uncharacterised_MJ0810"/>
</dbReference>
<dbReference type="InterPro" id="IPR004183">
    <property type="entry name" value="Xdiol_dOase_suB"/>
</dbReference>
<dbReference type="NCBIfam" id="TIGR04335">
    <property type="entry name" value="AmmeMemoSam_A"/>
    <property type="match status" value="1"/>
</dbReference>
<dbReference type="NCBIfam" id="TIGR04336">
    <property type="entry name" value="AmmeMemoSam_B"/>
    <property type="match status" value="1"/>
</dbReference>
<dbReference type="PANTHER" id="PTHR13016:SF0">
    <property type="entry name" value="AMME SYNDROME CANDIDATE GENE 1 PROTEIN"/>
    <property type="match status" value="1"/>
</dbReference>
<dbReference type="PANTHER" id="PTHR13016">
    <property type="entry name" value="AMMECR1 HOMOLOG"/>
    <property type="match status" value="1"/>
</dbReference>
<dbReference type="Pfam" id="PF01871">
    <property type="entry name" value="AMMECR1"/>
    <property type="match status" value="1"/>
</dbReference>
<dbReference type="Pfam" id="PF02900">
    <property type="entry name" value="LigB"/>
    <property type="match status" value="1"/>
</dbReference>
<dbReference type="SUPFAM" id="SSF143447">
    <property type="entry name" value="AMMECR1-like"/>
    <property type="match status" value="1"/>
</dbReference>
<dbReference type="SUPFAM" id="SSF53213">
    <property type="entry name" value="LigB-like"/>
    <property type="match status" value="1"/>
</dbReference>
<dbReference type="PROSITE" id="PS51112">
    <property type="entry name" value="AMMECR1"/>
    <property type="match status" value="1"/>
</dbReference>
<reference key="1">
    <citation type="journal article" date="2001" name="J. Bacteriol.">
        <title>Genome sequence and comparative analysis of the solvent-producing bacterium Clostridium acetobutylicum.</title>
        <authorList>
            <person name="Noelling J."/>
            <person name="Breton G."/>
            <person name="Omelchenko M.V."/>
            <person name="Makarova K.S."/>
            <person name="Zeng Q."/>
            <person name="Gibson R."/>
            <person name="Lee H.M."/>
            <person name="Dubois J."/>
            <person name="Qiu D."/>
            <person name="Hitti J."/>
            <person name="Wolf Y.I."/>
            <person name="Tatusov R.L."/>
            <person name="Sabathe F."/>
            <person name="Doucette-Stamm L.A."/>
            <person name="Soucaille P."/>
            <person name="Daly M.J."/>
            <person name="Bennett G.N."/>
            <person name="Koonin E.V."/>
            <person name="Smith D.R."/>
        </authorList>
    </citation>
    <scope>NUCLEOTIDE SEQUENCE [LARGE SCALE GENOMIC DNA]</scope>
    <source>
        <strain>ATCC 824 / DSM 792 / JCM 1419 / IAM 19013 / LMG 5710 / NBRC 13948 / NRRL B-527 / VKM B-1787 / 2291 / W</strain>
    </source>
</reference>
<feature type="chain" id="PRO_0000142394" description="Protein CA_C1420">
    <location>
        <begin position="1"/>
        <end position="468"/>
    </location>
</feature>
<feature type="domain" description="AMMECR1">
    <location>
        <begin position="296"/>
        <end position="468"/>
    </location>
</feature>
<feature type="region of interest" description="Unknown">
    <location>
        <begin position="1"/>
        <end position="289"/>
    </location>
</feature>
<sequence length="468" mass="52888">MSLNGFYLLPHPPIVVPEVGRGEEKKIENTTKSFEAIAKDIAGKAPNTIIIVTPHGTMFQDYIALAYEDEISGSFKDFRAPNVSMELKINKELTSKIYELAYGERIPSVMATNDILKKYNTSVFLDHGCMVPLYFINKYYKEYKIVHITYAALSDIELYRFGMNVTKAVEELNENAVFIASGDLSHRLREDGPYGYNPAGEKFDKELLNNLKDGNVEGVFSIDKDTVYNAGECGRRSVAVLLGTLEGKKFKGEILSYEGTFGVGYGVMKLEAFSNDTSKLKELERIRKDEYESKKQEKDPYVKLARESLTQYLTTGEAIEEIPDYVTEEMRDLKRGVFVSLKKFGDLRGCIGTIFPVTDNIAEEIIRNAIEAGLNDPRFYEVGKDELVDIDFSVDVLDEPESATREELDPKKYGVIVTHGRKKGLLLPNLEGVNTVEEQLEIALEKADIDSHEDYTIEKFMVTRHKES</sequence>
<accession>Q97J66</accession>
<protein>
    <recommendedName>
        <fullName>Protein CA_C1420</fullName>
    </recommendedName>
</protein>
<proteinExistence type="inferred from homology"/>
<name>Y1420_CLOAB</name>
<keyword id="KW-1185">Reference proteome</keyword>